<reference key="1">
    <citation type="submission" date="2007-10" db="EMBL/GenBank/DDBJ databases">
        <title>Brucella canis ATCC 23365 whole genome shotgun sequencing project.</title>
        <authorList>
            <person name="Setubal J.C."/>
            <person name="Bowns C."/>
            <person name="Boyle S."/>
            <person name="Crasta O.R."/>
            <person name="Czar M.J."/>
            <person name="Dharmanolla C."/>
            <person name="Gillespie J.J."/>
            <person name="Kenyon R.W."/>
            <person name="Lu J."/>
            <person name="Mane S."/>
            <person name="Mohapatra S."/>
            <person name="Nagrani S."/>
            <person name="Purkayastha A."/>
            <person name="Rajasimha H.K."/>
            <person name="Shallom J.M."/>
            <person name="Shallom S."/>
            <person name="Shukla M."/>
            <person name="Snyder E.E."/>
            <person name="Sobral B.W."/>
            <person name="Wattam A.R."/>
            <person name="Will R."/>
            <person name="Williams K."/>
            <person name="Yoo H."/>
            <person name="Bruce D."/>
            <person name="Detter C."/>
            <person name="Munk C."/>
            <person name="Brettin T.S."/>
        </authorList>
    </citation>
    <scope>NUCLEOTIDE SEQUENCE [LARGE SCALE GENOMIC DNA]</scope>
    <source>
        <strain>ATCC 23365 / NCTC 10854 / RM-666</strain>
    </source>
</reference>
<keyword id="KW-0012">Acyltransferase</keyword>
<keyword id="KW-0963">Cytoplasm</keyword>
<keyword id="KW-0408">Iron</keyword>
<keyword id="KW-0479">Metal-binding</keyword>
<keyword id="KW-1185">Reference proteome</keyword>
<keyword id="KW-0808">Transferase</keyword>
<keyword id="KW-0819">tRNA processing</keyword>
<proteinExistence type="inferred from homology"/>
<name>TSAD_BRUC2</name>
<feature type="chain" id="PRO_1000087468" description="tRNA N6-adenosine threonylcarbamoyltransferase">
    <location>
        <begin position="1"/>
        <end position="359"/>
    </location>
</feature>
<feature type="region of interest" description="Disordered" evidence="2">
    <location>
        <begin position="328"/>
        <end position="359"/>
    </location>
</feature>
<feature type="binding site" evidence="1">
    <location>
        <position position="115"/>
    </location>
    <ligand>
        <name>Fe cation</name>
        <dbReference type="ChEBI" id="CHEBI:24875"/>
    </ligand>
</feature>
<feature type="binding site" evidence="1">
    <location>
        <position position="119"/>
    </location>
    <ligand>
        <name>Fe cation</name>
        <dbReference type="ChEBI" id="CHEBI:24875"/>
    </ligand>
</feature>
<feature type="binding site" evidence="1">
    <location>
        <begin position="137"/>
        <end position="141"/>
    </location>
    <ligand>
        <name>substrate</name>
    </ligand>
</feature>
<feature type="binding site" evidence="1">
    <location>
        <position position="170"/>
    </location>
    <ligand>
        <name>substrate</name>
    </ligand>
</feature>
<feature type="binding site" evidence="1">
    <location>
        <position position="183"/>
    </location>
    <ligand>
        <name>substrate</name>
    </ligand>
</feature>
<feature type="binding site" evidence="1">
    <location>
        <position position="283"/>
    </location>
    <ligand>
        <name>substrate</name>
    </ligand>
</feature>
<feature type="binding site" evidence="1">
    <location>
        <position position="311"/>
    </location>
    <ligand>
        <name>Fe cation</name>
        <dbReference type="ChEBI" id="CHEBI:24875"/>
    </ligand>
</feature>
<evidence type="ECO:0000255" key="1">
    <source>
        <dbReference type="HAMAP-Rule" id="MF_01445"/>
    </source>
</evidence>
<evidence type="ECO:0000256" key="2">
    <source>
        <dbReference type="SAM" id="MobiDB-lite"/>
    </source>
</evidence>
<comment type="function">
    <text evidence="1">Required for the formation of a threonylcarbamoyl group on adenosine at position 37 (t(6)A37) in tRNAs that read codons beginning with adenine. Is involved in the transfer of the threonylcarbamoyl moiety of threonylcarbamoyl-AMP (TC-AMP) to the N6 group of A37, together with TsaE and TsaB. TsaD likely plays a direct catalytic role in this reaction.</text>
</comment>
<comment type="catalytic activity">
    <reaction evidence="1">
        <text>L-threonylcarbamoyladenylate + adenosine(37) in tRNA = N(6)-L-threonylcarbamoyladenosine(37) in tRNA + AMP + H(+)</text>
        <dbReference type="Rhea" id="RHEA:37059"/>
        <dbReference type="Rhea" id="RHEA-COMP:10162"/>
        <dbReference type="Rhea" id="RHEA-COMP:10163"/>
        <dbReference type="ChEBI" id="CHEBI:15378"/>
        <dbReference type="ChEBI" id="CHEBI:73682"/>
        <dbReference type="ChEBI" id="CHEBI:74411"/>
        <dbReference type="ChEBI" id="CHEBI:74418"/>
        <dbReference type="ChEBI" id="CHEBI:456215"/>
        <dbReference type="EC" id="2.3.1.234"/>
    </reaction>
</comment>
<comment type="cofactor">
    <cofactor evidence="1">
        <name>Fe(2+)</name>
        <dbReference type="ChEBI" id="CHEBI:29033"/>
    </cofactor>
    <text evidence="1">Binds 1 Fe(2+) ion per subunit.</text>
</comment>
<comment type="subcellular location">
    <subcellularLocation>
        <location evidence="1">Cytoplasm</location>
    </subcellularLocation>
</comment>
<comment type="similarity">
    <text evidence="1">Belongs to the KAE1 / TsaD family.</text>
</comment>
<sequence>MRVLGIETSCDETAAAIVQRDDMGEGRILSNVVLSQIAEHEPYGGVVPEIAARAHVEALDRLVDRALNDAGLKLYEVDAVAATAGPGLIGGLIVGLMTAKALAMAAQKPFYAVNHLEGHALTARLTDGLPFPYLLLLVSGGHTQMVLVRGIGDYERLGTTIDDALGEAFDKTAKLLGLPYPGGPAVERMALQGDQKRFALPRPLKGEARLDFSFSGLKTAVRQTATELVPLTDQDVTDICASFQAAVADTLSDRVGRSLERFKTEFPDCATPSLVVAGGVAANKTLRAALENLCTRHGFAFIAPPLNLCTDNAAMIAWAGAERAATQAPDSLDIAPRSRWPLDEKSAPVFGTGRRGAKA</sequence>
<accession>A9M8M3</accession>
<gene>
    <name evidence="1" type="primary">tsaD</name>
    <name type="synonym">gcp</name>
    <name type="ordered locus">BCAN_A1931</name>
</gene>
<organism>
    <name type="scientific">Brucella canis (strain ATCC 23365 / NCTC 10854 / RM-666)</name>
    <dbReference type="NCBI Taxonomy" id="483179"/>
    <lineage>
        <taxon>Bacteria</taxon>
        <taxon>Pseudomonadati</taxon>
        <taxon>Pseudomonadota</taxon>
        <taxon>Alphaproteobacteria</taxon>
        <taxon>Hyphomicrobiales</taxon>
        <taxon>Brucellaceae</taxon>
        <taxon>Brucella/Ochrobactrum group</taxon>
        <taxon>Brucella</taxon>
    </lineage>
</organism>
<protein>
    <recommendedName>
        <fullName evidence="1">tRNA N6-adenosine threonylcarbamoyltransferase</fullName>
        <ecNumber evidence="1">2.3.1.234</ecNumber>
    </recommendedName>
    <alternativeName>
        <fullName evidence="1">N6-L-threonylcarbamoyladenine synthase</fullName>
        <shortName evidence="1">t(6)A synthase</shortName>
    </alternativeName>
    <alternativeName>
        <fullName evidence="1">t(6)A37 threonylcarbamoyladenosine biosynthesis protein TsaD</fullName>
    </alternativeName>
    <alternativeName>
        <fullName evidence="1">tRNA threonylcarbamoyladenosine biosynthesis protein TsaD</fullName>
    </alternativeName>
</protein>
<dbReference type="EC" id="2.3.1.234" evidence="1"/>
<dbReference type="EMBL" id="CP000872">
    <property type="protein sequence ID" value="ABX62921.1"/>
    <property type="molecule type" value="Genomic_DNA"/>
</dbReference>
<dbReference type="RefSeq" id="WP_006132942.1">
    <property type="nucleotide sequence ID" value="NC_010103.1"/>
</dbReference>
<dbReference type="SMR" id="A9M8M3"/>
<dbReference type="GeneID" id="55591480"/>
<dbReference type="KEGG" id="bcs:BCAN_A1931"/>
<dbReference type="HOGENOM" id="CLU_023208_0_2_5"/>
<dbReference type="Proteomes" id="UP000001385">
    <property type="component" value="Chromosome I"/>
</dbReference>
<dbReference type="GO" id="GO:0005737">
    <property type="term" value="C:cytoplasm"/>
    <property type="evidence" value="ECO:0007669"/>
    <property type="project" value="UniProtKB-SubCell"/>
</dbReference>
<dbReference type="GO" id="GO:0005506">
    <property type="term" value="F:iron ion binding"/>
    <property type="evidence" value="ECO:0007669"/>
    <property type="project" value="UniProtKB-UniRule"/>
</dbReference>
<dbReference type="GO" id="GO:0061711">
    <property type="term" value="F:N(6)-L-threonylcarbamoyladenine synthase activity"/>
    <property type="evidence" value="ECO:0007669"/>
    <property type="project" value="UniProtKB-EC"/>
</dbReference>
<dbReference type="GO" id="GO:0002949">
    <property type="term" value="P:tRNA threonylcarbamoyladenosine modification"/>
    <property type="evidence" value="ECO:0007669"/>
    <property type="project" value="UniProtKB-UniRule"/>
</dbReference>
<dbReference type="CDD" id="cd24133">
    <property type="entry name" value="ASKHA_NBD_TsaD_bac"/>
    <property type="match status" value="1"/>
</dbReference>
<dbReference type="FunFam" id="3.30.420.40:FF:000040">
    <property type="entry name" value="tRNA N6-adenosine threonylcarbamoyltransferase"/>
    <property type="match status" value="1"/>
</dbReference>
<dbReference type="Gene3D" id="3.30.420.40">
    <property type="match status" value="2"/>
</dbReference>
<dbReference type="HAMAP" id="MF_01445">
    <property type="entry name" value="TsaD"/>
    <property type="match status" value="1"/>
</dbReference>
<dbReference type="InterPro" id="IPR043129">
    <property type="entry name" value="ATPase_NBD"/>
</dbReference>
<dbReference type="InterPro" id="IPR000905">
    <property type="entry name" value="Gcp-like_dom"/>
</dbReference>
<dbReference type="InterPro" id="IPR017861">
    <property type="entry name" value="KAE1/TsaD"/>
</dbReference>
<dbReference type="InterPro" id="IPR022450">
    <property type="entry name" value="TsaD"/>
</dbReference>
<dbReference type="NCBIfam" id="TIGR00329">
    <property type="entry name" value="gcp_kae1"/>
    <property type="match status" value="1"/>
</dbReference>
<dbReference type="NCBIfam" id="TIGR03723">
    <property type="entry name" value="T6A_TsaD_YgjD"/>
    <property type="match status" value="1"/>
</dbReference>
<dbReference type="PANTHER" id="PTHR11735">
    <property type="entry name" value="TRNA N6-ADENOSINE THREONYLCARBAMOYLTRANSFERASE"/>
    <property type="match status" value="1"/>
</dbReference>
<dbReference type="PANTHER" id="PTHR11735:SF6">
    <property type="entry name" value="TRNA N6-ADENOSINE THREONYLCARBAMOYLTRANSFERASE, MITOCHONDRIAL"/>
    <property type="match status" value="1"/>
</dbReference>
<dbReference type="Pfam" id="PF00814">
    <property type="entry name" value="TsaD"/>
    <property type="match status" value="1"/>
</dbReference>
<dbReference type="PRINTS" id="PR00789">
    <property type="entry name" value="OSIALOPTASE"/>
</dbReference>
<dbReference type="SUPFAM" id="SSF53067">
    <property type="entry name" value="Actin-like ATPase domain"/>
    <property type="match status" value="2"/>
</dbReference>